<gene>
    <name evidence="1" type="primary">priS</name>
    <name type="synonym">priA</name>
    <name type="ordered locus">MmarC5_1606</name>
</gene>
<organism>
    <name type="scientific">Methanococcus maripaludis (strain C5 / ATCC BAA-1333)</name>
    <dbReference type="NCBI Taxonomy" id="402880"/>
    <lineage>
        <taxon>Archaea</taxon>
        <taxon>Methanobacteriati</taxon>
        <taxon>Methanobacteriota</taxon>
        <taxon>Methanomada group</taxon>
        <taxon>Methanococci</taxon>
        <taxon>Methanococcales</taxon>
        <taxon>Methanococcaceae</taxon>
        <taxon>Methanococcus</taxon>
    </lineage>
</organism>
<keyword id="KW-0235">DNA replication</keyword>
<keyword id="KW-0240">DNA-directed RNA polymerase</keyword>
<keyword id="KW-0460">Magnesium</keyword>
<keyword id="KW-0464">Manganese</keyword>
<keyword id="KW-0479">Metal-binding</keyword>
<keyword id="KW-0548">Nucleotidyltransferase</keyword>
<keyword id="KW-0639">Primosome</keyword>
<keyword id="KW-0804">Transcription</keyword>
<keyword id="KW-0808">Transferase</keyword>
<reference key="1">
    <citation type="submission" date="2007-03" db="EMBL/GenBank/DDBJ databases">
        <title>Complete sequence of chromosome of Methanococcus maripaludis C5.</title>
        <authorList>
            <consortium name="US DOE Joint Genome Institute"/>
            <person name="Copeland A."/>
            <person name="Lucas S."/>
            <person name="Lapidus A."/>
            <person name="Barry K."/>
            <person name="Glavina del Rio T."/>
            <person name="Dalin E."/>
            <person name="Tice H."/>
            <person name="Pitluck S."/>
            <person name="Chertkov O."/>
            <person name="Brettin T."/>
            <person name="Bruce D."/>
            <person name="Han C."/>
            <person name="Detter J.C."/>
            <person name="Schmutz J."/>
            <person name="Larimer F."/>
            <person name="Land M."/>
            <person name="Hauser L."/>
            <person name="Kyrpides N."/>
            <person name="Mikhailova N."/>
            <person name="Sieprawska-Lupa M."/>
            <person name="Whitman W.B."/>
            <person name="Richardson P."/>
        </authorList>
    </citation>
    <scope>NUCLEOTIDE SEQUENCE [LARGE SCALE GENOMIC DNA]</scope>
    <source>
        <strain>C5 / ATCC BAA-1333</strain>
    </source>
</reference>
<evidence type="ECO:0000255" key="1">
    <source>
        <dbReference type="HAMAP-Rule" id="MF_00700"/>
    </source>
</evidence>
<proteinExistence type="inferred from homology"/>
<accession>A4G0B9</accession>
<protein>
    <recommendedName>
        <fullName evidence="1">DNA primase small subunit PriS</fullName>
        <ecNumber evidence="1">2.7.7.-</ecNumber>
    </recommendedName>
</protein>
<comment type="function">
    <text evidence="1">Catalytic subunit of DNA primase, an RNA polymerase that catalyzes the synthesis of short RNA molecules used as primers for DNA polymerase during DNA replication. The small subunit contains the primase catalytic core and has DNA synthesis activity on its own. Binding to the large subunit stabilizes and modulates the activity, increasing the rate of DNA synthesis while decreasing the length of the DNA fragments, and conferring RNA synthesis capability. The DNA polymerase activity may enable DNA primase to also catalyze primer extension after primer synthesis. May also play a role in DNA repair.</text>
</comment>
<comment type="cofactor">
    <cofactor evidence="1">
        <name>Mg(2+)</name>
        <dbReference type="ChEBI" id="CHEBI:18420"/>
    </cofactor>
    <cofactor evidence="1">
        <name>Mn(2+)</name>
        <dbReference type="ChEBI" id="CHEBI:29035"/>
    </cofactor>
</comment>
<comment type="subunit">
    <text evidence="1">Heterodimer of a small subunit (PriS) and a large subunit (PriL).</text>
</comment>
<comment type="similarity">
    <text evidence="1">Belongs to the eukaryotic-type primase small subunit family.</text>
</comment>
<dbReference type="EC" id="2.7.7.-" evidence="1"/>
<dbReference type="EMBL" id="CP000609">
    <property type="protein sequence ID" value="ABO35903.1"/>
    <property type="molecule type" value="Genomic_DNA"/>
</dbReference>
<dbReference type="RefSeq" id="WP_011869350.1">
    <property type="nucleotide sequence ID" value="NC_009135.1"/>
</dbReference>
<dbReference type="SMR" id="A4G0B9"/>
<dbReference type="STRING" id="402880.MmarC5_1606"/>
<dbReference type="GeneID" id="4928678"/>
<dbReference type="KEGG" id="mmq:MmarC5_1606"/>
<dbReference type="eggNOG" id="arCOG04110">
    <property type="taxonomic scope" value="Archaea"/>
</dbReference>
<dbReference type="HOGENOM" id="CLU_056123_1_0_2"/>
<dbReference type="OrthoDB" id="31125at2157"/>
<dbReference type="Proteomes" id="UP000000253">
    <property type="component" value="Chromosome"/>
</dbReference>
<dbReference type="GO" id="GO:0000428">
    <property type="term" value="C:DNA-directed RNA polymerase complex"/>
    <property type="evidence" value="ECO:0007669"/>
    <property type="project" value="UniProtKB-KW"/>
</dbReference>
<dbReference type="GO" id="GO:1990077">
    <property type="term" value="C:primosome complex"/>
    <property type="evidence" value="ECO:0007669"/>
    <property type="project" value="UniProtKB-KW"/>
</dbReference>
<dbReference type="GO" id="GO:0003899">
    <property type="term" value="F:DNA-directed RNA polymerase activity"/>
    <property type="evidence" value="ECO:0007669"/>
    <property type="project" value="InterPro"/>
</dbReference>
<dbReference type="GO" id="GO:0046872">
    <property type="term" value="F:metal ion binding"/>
    <property type="evidence" value="ECO:0007669"/>
    <property type="project" value="UniProtKB-KW"/>
</dbReference>
<dbReference type="GO" id="GO:0006269">
    <property type="term" value="P:DNA replication, synthesis of primer"/>
    <property type="evidence" value="ECO:0007669"/>
    <property type="project" value="UniProtKB-UniRule"/>
</dbReference>
<dbReference type="CDD" id="cd04860">
    <property type="entry name" value="AE_Prim_S"/>
    <property type="match status" value="1"/>
</dbReference>
<dbReference type="Gene3D" id="3.90.920.10">
    <property type="entry name" value="DNA primase, PRIM domain"/>
    <property type="match status" value="1"/>
</dbReference>
<dbReference type="HAMAP" id="MF_00700">
    <property type="entry name" value="DNA_primase_sml_arc"/>
    <property type="match status" value="1"/>
</dbReference>
<dbReference type="InterPro" id="IPR002755">
    <property type="entry name" value="DNA_primase_S"/>
</dbReference>
<dbReference type="InterPro" id="IPR014052">
    <property type="entry name" value="DNA_primase_ssu_euk/arc"/>
</dbReference>
<dbReference type="InterPro" id="IPR023639">
    <property type="entry name" value="DNA_primase_ssu_PriS"/>
</dbReference>
<dbReference type="NCBIfam" id="TIGR00335">
    <property type="entry name" value="primase_sml"/>
    <property type="match status" value="1"/>
</dbReference>
<dbReference type="PANTHER" id="PTHR10536">
    <property type="entry name" value="DNA PRIMASE SMALL SUBUNIT"/>
    <property type="match status" value="1"/>
</dbReference>
<dbReference type="Pfam" id="PF01896">
    <property type="entry name" value="DNA_primase_S"/>
    <property type="match status" value="1"/>
</dbReference>
<dbReference type="SUPFAM" id="SSF56747">
    <property type="entry name" value="Prim-pol domain"/>
    <property type="match status" value="1"/>
</dbReference>
<sequence>MNENPAANKIFNEVSSLYKQYFEYAIKVRKWLEIPDDLPHREIGYGMLKKVDNRNISFNTEGEYLTWVLKESPFHLYKSLSYMEYPDLVGGAAKKGLFKREVAFDIDTHKTEKCTHDDSWICEECLGEARNQVLILIEDFLFPDFGLSEKDLKIVFTGNRGYHIYLKPEDPELLKKIEKWGKNERRYFIEYILGKNLNLRNMGSRWKNILISEFKKNKIATKKFEKNSDWKTEIDTRKDTTRRKIYETIDKVKSRLELDEKVMDDDIRLLRTIGSLHGYTGLMVKEITYSSLKSNQFDPLNHGVFSKFHKIMYNVNIKQEIDPLTLKGDTFNHKSTEIPASYLLFLFGHGIDFEILE</sequence>
<name>PRIS_METM5</name>
<feature type="chain" id="PRO_1000045504" description="DNA primase small subunit PriS">
    <location>
        <begin position="1"/>
        <end position="357"/>
    </location>
</feature>
<feature type="active site" evidence="1">
    <location>
        <position position="105"/>
    </location>
</feature>
<feature type="active site" evidence="1">
    <location>
        <position position="107"/>
    </location>
</feature>
<feature type="active site" evidence="1">
    <location>
        <position position="259"/>
    </location>
</feature>